<comment type="function">
    <text evidence="1">This protein specifically catalyzes the removal of signal peptides from prolipoproteins.</text>
</comment>
<comment type="catalytic activity">
    <reaction evidence="1">
        <text>Release of signal peptides from bacterial membrane prolipoproteins. Hydrolyzes -Xaa-Yaa-Zaa-|-(S,diacylglyceryl)Cys-, in which Xaa is hydrophobic (preferably Leu), and Yaa (Ala or Ser) and Zaa (Gly or Ala) have small, neutral side chains.</text>
        <dbReference type="EC" id="3.4.23.36"/>
    </reaction>
</comment>
<comment type="pathway">
    <text evidence="1">Protein modification; lipoprotein biosynthesis (signal peptide cleavage).</text>
</comment>
<comment type="subcellular location">
    <subcellularLocation>
        <location evidence="1">Cell inner membrane</location>
        <topology evidence="1">Multi-pass membrane protein</topology>
    </subcellularLocation>
</comment>
<comment type="similarity">
    <text evidence="1">Belongs to the peptidase A8 family.</text>
</comment>
<accession>A3NSD0</accession>
<sequence>MAKTLSKSSGGALAPWLGISLIVILFDQLTKIAVLKTFAYGAMHALTPFFNLTLIYNRGAAFGFLATAGGWQRWAFTALGIGATLVICYLLKRHGHQRLFSLSLALILGGALGNVIDRLIYGHVIDFLDFHVGAWHWPAFNLADSAITVGAVLLIYDELRRVRGAR</sequence>
<proteinExistence type="inferred from homology"/>
<reference key="1">
    <citation type="journal article" date="2010" name="Genome Biol. Evol.">
        <title>Continuing evolution of Burkholderia mallei through genome reduction and large-scale rearrangements.</title>
        <authorList>
            <person name="Losada L."/>
            <person name="Ronning C.M."/>
            <person name="DeShazer D."/>
            <person name="Woods D."/>
            <person name="Fedorova N."/>
            <person name="Kim H.S."/>
            <person name="Shabalina S.A."/>
            <person name="Pearson T.R."/>
            <person name="Brinkac L."/>
            <person name="Tan P."/>
            <person name="Nandi T."/>
            <person name="Crabtree J."/>
            <person name="Badger J."/>
            <person name="Beckstrom-Sternberg S."/>
            <person name="Saqib M."/>
            <person name="Schutzer S.E."/>
            <person name="Keim P."/>
            <person name="Nierman W.C."/>
        </authorList>
    </citation>
    <scope>NUCLEOTIDE SEQUENCE [LARGE SCALE GENOMIC DNA]</scope>
    <source>
        <strain>1106a</strain>
    </source>
</reference>
<name>LSPA_BURP0</name>
<keyword id="KW-0064">Aspartyl protease</keyword>
<keyword id="KW-0997">Cell inner membrane</keyword>
<keyword id="KW-1003">Cell membrane</keyword>
<keyword id="KW-0378">Hydrolase</keyword>
<keyword id="KW-0472">Membrane</keyword>
<keyword id="KW-0645">Protease</keyword>
<keyword id="KW-0812">Transmembrane</keyword>
<keyword id="KW-1133">Transmembrane helix</keyword>
<evidence type="ECO:0000255" key="1">
    <source>
        <dbReference type="HAMAP-Rule" id="MF_00161"/>
    </source>
</evidence>
<gene>
    <name evidence="1" type="primary">lspA</name>
    <name type="ordered locus">BURPS1106A_0970</name>
</gene>
<feature type="chain" id="PRO_1000038789" description="Lipoprotein signal peptidase">
    <location>
        <begin position="1"/>
        <end position="166"/>
    </location>
</feature>
<feature type="transmembrane region" description="Helical" evidence="1">
    <location>
        <begin position="10"/>
        <end position="30"/>
    </location>
</feature>
<feature type="transmembrane region" description="Helical" evidence="1">
    <location>
        <begin position="32"/>
        <end position="52"/>
    </location>
</feature>
<feature type="transmembrane region" description="Helical" evidence="1">
    <location>
        <begin position="71"/>
        <end position="91"/>
    </location>
</feature>
<feature type="transmembrane region" description="Helical" evidence="1">
    <location>
        <begin position="100"/>
        <end position="120"/>
    </location>
</feature>
<feature type="transmembrane region" description="Helical" evidence="1">
    <location>
        <begin position="135"/>
        <end position="155"/>
    </location>
</feature>
<feature type="active site" evidence="1">
    <location>
        <position position="126"/>
    </location>
</feature>
<feature type="active site" evidence="1">
    <location>
        <position position="144"/>
    </location>
</feature>
<protein>
    <recommendedName>
        <fullName evidence="1">Lipoprotein signal peptidase</fullName>
        <ecNumber evidence="1">3.4.23.36</ecNumber>
    </recommendedName>
    <alternativeName>
        <fullName evidence="1">Prolipoprotein signal peptidase</fullName>
    </alternativeName>
    <alternativeName>
        <fullName evidence="1">Signal peptidase II</fullName>
        <shortName evidence="1">SPase II</shortName>
    </alternativeName>
</protein>
<dbReference type="EC" id="3.4.23.36" evidence="1"/>
<dbReference type="EMBL" id="CP000572">
    <property type="protein sequence ID" value="ABN90625.1"/>
    <property type="molecule type" value="Genomic_DNA"/>
</dbReference>
<dbReference type="RefSeq" id="WP_004186086.1">
    <property type="nucleotide sequence ID" value="NC_009076.1"/>
</dbReference>
<dbReference type="SMR" id="A3NSD0"/>
<dbReference type="GeneID" id="93059418"/>
<dbReference type="KEGG" id="bpl:BURPS1106A_0970"/>
<dbReference type="HOGENOM" id="CLU_083252_4_0_4"/>
<dbReference type="UniPathway" id="UPA00665"/>
<dbReference type="Proteomes" id="UP000006738">
    <property type="component" value="Chromosome I"/>
</dbReference>
<dbReference type="GO" id="GO:0005886">
    <property type="term" value="C:plasma membrane"/>
    <property type="evidence" value="ECO:0007669"/>
    <property type="project" value="UniProtKB-SubCell"/>
</dbReference>
<dbReference type="GO" id="GO:0004190">
    <property type="term" value="F:aspartic-type endopeptidase activity"/>
    <property type="evidence" value="ECO:0007669"/>
    <property type="project" value="UniProtKB-UniRule"/>
</dbReference>
<dbReference type="GO" id="GO:0006508">
    <property type="term" value="P:proteolysis"/>
    <property type="evidence" value="ECO:0007669"/>
    <property type="project" value="UniProtKB-KW"/>
</dbReference>
<dbReference type="HAMAP" id="MF_00161">
    <property type="entry name" value="LspA"/>
    <property type="match status" value="1"/>
</dbReference>
<dbReference type="InterPro" id="IPR001872">
    <property type="entry name" value="Peptidase_A8"/>
</dbReference>
<dbReference type="NCBIfam" id="TIGR00077">
    <property type="entry name" value="lspA"/>
    <property type="match status" value="1"/>
</dbReference>
<dbReference type="PANTHER" id="PTHR33695">
    <property type="entry name" value="LIPOPROTEIN SIGNAL PEPTIDASE"/>
    <property type="match status" value="1"/>
</dbReference>
<dbReference type="PANTHER" id="PTHR33695:SF1">
    <property type="entry name" value="LIPOPROTEIN SIGNAL PEPTIDASE"/>
    <property type="match status" value="1"/>
</dbReference>
<dbReference type="Pfam" id="PF01252">
    <property type="entry name" value="Peptidase_A8"/>
    <property type="match status" value="1"/>
</dbReference>
<dbReference type="PRINTS" id="PR00781">
    <property type="entry name" value="LIPOSIGPTASE"/>
</dbReference>
<dbReference type="PROSITE" id="PS00855">
    <property type="entry name" value="SPASE_II"/>
    <property type="match status" value="1"/>
</dbReference>
<organism>
    <name type="scientific">Burkholderia pseudomallei (strain 1106a)</name>
    <dbReference type="NCBI Taxonomy" id="357348"/>
    <lineage>
        <taxon>Bacteria</taxon>
        <taxon>Pseudomonadati</taxon>
        <taxon>Pseudomonadota</taxon>
        <taxon>Betaproteobacteria</taxon>
        <taxon>Burkholderiales</taxon>
        <taxon>Burkholderiaceae</taxon>
        <taxon>Burkholderia</taxon>
        <taxon>pseudomallei group</taxon>
    </lineage>
</organism>